<accession>Q9W1X4</accession>
<accession>Q8T3K4</accession>
<gene>
    <name evidence="9" type="primary">Nup214</name>
    <name type="ORF">CG3820</name>
</gene>
<keyword id="KW-0472">Membrane</keyword>
<keyword id="KW-0509">mRNA transport</keyword>
<keyword id="KW-0906">Nuclear pore complex</keyword>
<keyword id="KW-0539">Nucleus</keyword>
<keyword id="KW-0653">Protein transport</keyword>
<keyword id="KW-1185">Reference proteome</keyword>
<keyword id="KW-0677">Repeat</keyword>
<keyword id="KW-0811">Translocation</keyword>
<keyword id="KW-0813">Transport</keyword>
<protein>
    <recommendedName>
        <fullName>Nuclear pore complex protein Nup214</fullName>
    </recommendedName>
    <alternativeName>
        <fullName>214 kDa nucleoporin</fullName>
        <shortName>DNup214</shortName>
    </alternativeName>
    <alternativeName>
        <fullName>Nucleoporin Nup214</fullName>
    </alternativeName>
</protein>
<proteinExistence type="evidence at protein level"/>
<evidence type="ECO:0000256" key="1">
    <source>
        <dbReference type="SAM" id="MobiDB-lite"/>
    </source>
</evidence>
<evidence type="ECO:0000269" key="2">
    <source>
    </source>
</evidence>
<evidence type="ECO:0000269" key="3">
    <source>
    </source>
</evidence>
<evidence type="ECO:0000269" key="4">
    <source>
    </source>
</evidence>
<evidence type="ECO:0000269" key="5">
    <source>
    </source>
</evidence>
<evidence type="ECO:0000269" key="6">
    <source>
    </source>
</evidence>
<evidence type="ECO:0000269" key="7">
    <source>
    </source>
</evidence>
<evidence type="ECO:0000305" key="8"/>
<evidence type="ECO:0000312" key="9">
    <source>
        <dbReference type="EMBL" id="AAF46928.2"/>
    </source>
</evidence>
<evidence type="ECO:0000312" key="10">
    <source>
        <dbReference type="EMBL" id="AAM11320.1"/>
    </source>
</evidence>
<organism>
    <name type="scientific">Drosophila melanogaster</name>
    <name type="common">Fruit fly</name>
    <dbReference type="NCBI Taxonomy" id="7227"/>
    <lineage>
        <taxon>Eukaryota</taxon>
        <taxon>Metazoa</taxon>
        <taxon>Ecdysozoa</taxon>
        <taxon>Arthropoda</taxon>
        <taxon>Hexapoda</taxon>
        <taxon>Insecta</taxon>
        <taxon>Pterygota</taxon>
        <taxon>Neoptera</taxon>
        <taxon>Endopterygota</taxon>
        <taxon>Diptera</taxon>
        <taxon>Brachycera</taxon>
        <taxon>Muscomorpha</taxon>
        <taxon>Ephydroidea</taxon>
        <taxon>Drosophilidae</taxon>
        <taxon>Drosophila</taxon>
        <taxon>Sophophora</taxon>
    </lineage>
</organism>
<sequence>MAQNAPDCEDTQDFQFKLHHKIVAFKKCGEPRSNVNLLAVSSSRGLLFAGSPTQPELKVIIVKDLVNAKSTAQQPQARLVPLPSIPNYIACSSDGNLLAVNHTQNGTSLLSIYAVLSFMTPDVRPVYNIRLAAEDHVHGVQLLWNPVLPNSLAVVLSNGALAMYALKEGGNFEMHSLDKNQQVKCGCWSPKGKQIVLGFPGGTVKQFKPDLTLAKTLLCPPNIHDAPFDTIAIQWLSTFQFAVIFLQHGEDCSPSLYILNAPKAGAPSYINYYDICYSMNGPRNHQFVFSHVPQWNLLLVVSANGVEVGIMRSTEAGDTPAWQQLTLLDEARIEMPLSEDKDETFPLGFAFDTSTTHQLTINEKKLQTMPMVHVLSSDGELLSFNFLNVLPTAVSVCSPPPPVADTSGQFKPLNMLLASEEEEQPAWAASPSKAPAATPAASSDISFAFTPNTVTSTPAPSKDKQPSLFSGFGAAAAKAPAPQLSFGTAPTSSPVSFGAPTTNAAKPTTPFGGFGTQATTTAMGSMFSASGANAFGGMALNKPAIASVTPRTAAPGSTVPATPASAPANKPLYTVPLTFTPVDTKPATSAPPQIADESLKPDDTEPIIKDMIALQIEAFSKDIQKQKEQTKELLKGIAAPSALRAYAKRLDDLQELNEQAKDVEFELDVQGLRQGLNEAYAIVAECRGKLEIYRKPEITRLMNSSSCDPSGRRMLARLQSYVAANEAQLRLAQQHVDLQWEQFQDVVRRNSKSRMHMPCLEGIYQRLTRLQNLTSNQRIVQNNIKSKLKERGLLQAALLDQEKSRTRTNEAVDTLTDSILTMSLSQVVDSNAAKLTRERLQKIRNIVQLQKINVICPQRPDRVGLKSEVILETKRRAEQIKRAAAKPATANKYTQAAVAPPSPPDVAPTPAVAPMPQATVTVAPPLPKPMPSIPSVVEKPGVPTHPTTPVATPFSFSQSIPFVKTSTVTPTTNTVTPGEAAKPGLSIFGGSTISSFSFGGGAAKSALSFGTGSPAVAAPTPKPNPLSAVEKPTPEPTKPKEQKAAESKEFKAVQPETEESKVPQKPKAETENKSFGFGGFTGTGGTVGNTSSSPFSFGGLGSSLGFGGTAAAVPKSEPSSTATTSVATSASTAPFGIFSAALAKPSNSEPITTVTSNTTTITSKPTNVIASSSVTDAPSVTTTNAVTSSTDPIGGLFSSVTICKPNTPADTTKPANIFGGGLSAGSFSFGGTIDASKGLFGSTKPVATAPTSVTEANNKTDPISTTPSAISTTTATTTVSSPAVVPAAVTAAVPATSSTTVTSSTAVPGSAFSFSNAFSTLSAGGAAAPTTSASAPLAAKSPTATSTGNNSSNSVFGGGFAVATSTAAPVASPFQSAAKSPVSSANIFGSIPKAETSVFGGATTAPSNTTAAATPDAPPAGLFASAAISNPSPFGSPTTRAPASGGNIFGQAVKPSVFGQPAQAGDSGGSIFGGGSASTPFGSSSIFGGGNTQGAVGAPAAGSTSIFGQKVFGQSSAAAPAAGGNIFSNPVGSPQASPFGGGGNSIFGSPATAPPASGGSIFGGGSSSGGFGSFTQTTPAQGGFGGGFGQGGGGSVAQTGFGSPQAPQQQTTTPGGFGAKPVFGGSPAFGASPTFGGGATFGSPKGFGGFGGASPVASPPPFGAAAKPAQGNIFETLGGQESGLSFGNLAQTGNSNAQKPAFGGSSFMNYR</sequence>
<feature type="chain" id="PRO_0000204860" description="Nuclear pore complex protein Nup214">
    <location>
        <begin position="1"/>
        <end position="1711"/>
    </location>
</feature>
<feature type="repeat" description="1" evidence="8">
    <location>
        <begin position="472"/>
        <end position="473"/>
    </location>
</feature>
<feature type="repeat" description="2" evidence="8">
    <location>
        <begin position="486"/>
        <end position="487"/>
    </location>
</feature>
<feature type="repeat" description="3" evidence="8">
    <location>
        <begin position="497"/>
        <end position="498"/>
    </location>
</feature>
<feature type="repeat" description="4" evidence="8">
    <location>
        <begin position="511"/>
        <end position="512"/>
    </location>
</feature>
<feature type="repeat" description="5" evidence="8">
    <location>
        <begin position="514"/>
        <end position="515"/>
    </location>
</feature>
<feature type="repeat" description="6" evidence="8">
    <location>
        <begin position="535"/>
        <end position="536"/>
    </location>
</feature>
<feature type="repeat" description="7" evidence="8">
    <location>
        <begin position="588"/>
        <end position="589"/>
    </location>
</feature>
<feature type="repeat" description="8" evidence="8">
    <location>
        <begin position="598"/>
        <end position="599"/>
    </location>
</feature>
<feature type="repeat" description="9" evidence="8">
    <location>
        <begin position="1009"/>
        <end position="1010"/>
    </location>
</feature>
<feature type="repeat" description="10" evidence="8">
    <location>
        <begin position="1075"/>
        <end position="1076"/>
    </location>
</feature>
<feature type="repeat" description="11" evidence="8">
    <location>
        <begin position="1077"/>
        <end position="1078"/>
    </location>
</feature>
<feature type="repeat" description="12" evidence="8">
    <location>
        <begin position="1097"/>
        <end position="1098"/>
    </location>
</feature>
<feature type="repeat" description="13" evidence="8">
    <location>
        <begin position="1106"/>
        <end position="1107"/>
    </location>
</feature>
<feature type="repeat" description="14" evidence="8">
    <location>
        <begin position="1135"/>
        <end position="1136"/>
    </location>
</feature>
<feature type="repeat" description="15" evidence="8">
    <location>
        <begin position="1218"/>
        <end position="1219"/>
    </location>
</feature>
<feature type="repeat" description="16" evidence="8">
    <location>
        <begin position="1229"/>
        <end position="1230"/>
    </location>
</feature>
<feature type="repeat" description="17" evidence="8">
    <location>
        <begin position="1240"/>
        <end position="1241"/>
    </location>
</feature>
<feature type="repeat" description="18" evidence="8">
    <location>
        <begin position="1356"/>
        <end position="1357"/>
    </location>
</feature>
<feature type="repeat" description="19" evidence="8">
    <location>
        <begin position="1388"/>
        <end position="1389"/>
    </location>
</feature>
<feature type="repeat" description="20" evidence="8">
    <location>
        <begin position="1399"/>
        <end position="1400"/>
    </location>
</feature>
<feature type="repeat" description="21" evidence="8">
    <location>
        <begin position="1434"/>
        <end position="1435"/>
    </location>
</feature>
<feature type="repeat" description="22" evidence="8">
    <location>
        <begin position="1449"/>
        <end position="1450"/>
    </location>
</feature>
<feature type="repeat" description="23" evidence="8">
    <location>
        <begin position="1458"/>
        <end position="1459"/>
    </location>
</feature>
<feature type="repeat" description="24" evidence="8">
    <location>
        <begin position="1472"/>
        <end position="1473"/>
    </location>
</feature>
<feature type="repeat" description="25" evidence="8">
    <location>
        <begin position="1481"/>
        <end position="1482"/>
    </location>
</feature>
<feature type="repeat" description="26" evidence="8">
    <location>
        <begin position="1487"/>
        <end position="1488"/>
    </location>
</feature>
<feature type="repeat" description="27" evidence="8">
    <location>
        <begin position="1507"/>
        <end position="1508"/>
    </location>
</feature>
<feature type="repeat" description="28" evidence="8">
    <location>
        <begin position="1512"/>
        <end position="1513"/>
    </location>
</feature>
<feature type="repeat" description="29" evidence="8">
    <location>
        <begin position="1539"/>
        <end position="1540"/>
    </location>
</feature>
<feature type="repeat" description="30" evidence="8">
    <location>
        <begin position="1547"/>
        <end position="1548"/>
    </location>
</feature>
<feature type="repeat" description="31" evidence="8">
    <location>
        <begin position="1562"/>
        <end position="1563"/>
    </location>
</feature>
<feature type="repeat" description="32" evidence="8">
    <location>
        <begin position="1571"/>
        <end position="1572"/>
    </location>
</feature>
<feature type="repeat" description="33" evidence="8">
    <location>
        <begin position="1584"/>
        <end position="1585"/>
    </location>
</feature>
<feature type="repeat" description="34" evidence="8">
    <location>
        <begin position="1588"/>
        <end position="1589"/>
    </location>
</feature>
<feature type="repeat" description="35" evidence="8">
    <location>
        <begin position="1601"/>
        <end position="1602"/>
    </location>
</feature>
<feature type="repeat" description="36" evidence="8">
    <location>
        <begin position="1617"/>
        <end position="1618"/>
    </location>
</feature>
<feature type="repeat" description="37" evidence="8">
    <location>
        <begin position="1623"/>
        <end position="1624"/>
    </location>
</feature>
<feature type="repeat" description="38" evidence="8">
    <location>
        <begin position="1629"/>
        <end position="1630"/>
    </location>
</feature>
<feature type="repeat" description="39" evidence="8">
    <location>
        <begin position="1635"/>
        <end position="1636"/>
    </location>
</feature>
<feature type="repeat" description="40" evidence="8">
    <location>
        <begin position="1641"/>
        <end position="1642"/>
    </location>
</feature>
<feature type="repeat" description="41" evidence="8">
    <location>
        <begin position="1647"/>
        <end position="1648"/>
    </location>
</feature>
<feature type="repeat" description="42" evidence="8">
    <location>
        <begin position="1650"/>
        <end position="1651"/>
    </location>
</feature>
<feature type="repeat" description="43" evidence="8">
    <location>
        <begin position="1662"/>
        <end position="1663"/>
    </location>
</feature>
<feature type="repeat" description="44" evidence="8">
    <location>
        <begin position="1686"/>
        <end position="1687"/>
    </location>
</feature>
<feature type="repeat" description="45" evidence="8">
    <location>
        <begin position="1702"/>
        <end position="1703"/>
    </location>
</feature>
<feature type="region of interest" description="45 X 2 AA repeats of F-G" evidence="8">
    <location>
        <begin position="472"/>
        <end position="1703"/>
    </location>
</feature>
<feature type="region of interest" description="Leucine-zipper 1">
    <location>
        <begin position="650"/>
        <end position="672"/>
    </location>
</feature>
<feature type="region of interest" description="Leucine-zipper 2">
    <location>
        <begin position="767"/>
        <end position="788"/>
    </location>
</feature>
<feature type="region of interest" description="Disordered" evidence="1">
    <location>
        <begin position="886"/>
        <end position="905"/>
    </location>
</feature>
<feature type="region of interest" description="Disordered" evidence="1">
    <location>
        <begin position="1012"/>
        <end position="1081"/>
    </location>
</feature>
<feature type="region of interest" description="Interaction with emb" evidence="5">
    <location>
        <begin position="1044"/>
        <end position="1711"/>
    </location>
</feature>
<feature type="region of interest" description="Disordered" evidence="1">
    <location>
        <begin position="1251"/>
        <end position="1270"/>
    </location>
</feature>
<feature type="region of interest" description="Disordered" evidence="1">
    <location>
        <begin position="1533"/>
        <end position="1552"/>
    </location>
</feature>
<feature type="region of interest" description="Disordered" evidence="1">
    <location>
        <begin position="1557"/>
        <end position="1614"/>
    </location>
</feature>
<feature type="region of interest" description="Disordered" evidence="1">
    <location>
        <begin position="1688"/>
        <end position="1711"/>
    </location>
</feature>
<feature type="compositionally biased region" description="Basic and acidic residues" evidence="1">
    <location>
        <begin position="1037"/>
        <end position="1051"/>
    </location>
</feature>
<feature type="compositionally biased region" description="Basic and acidic residues" evidence="1">
    <location>
        <begin position="1058"/>
        <end position="1072"/>
    </location>
</feature>
<feature type="compositionally biased region" description="Polar residues" evidence="1">
    <location>
        <begin position="1251"/>
        <end position="1261"/>
    </location>
</feature>
<feature type="compositionally biased region" description="Gly residues" evidence="1">
    <location>
        <begin position="1560"/>
        <end position="1572"/>
    </location>
</feature>
<feature type="compositionally biased region" description="Gly residues" evidence="1">
    <location>
        <begin position="1582"/>
        <end position="1595"/>
    </location>
</feature>
<feature type="compositionally biased region" description="Low complexity" evidence="1">
    <location>
        <begin position="1596"/>
        <end position="1614"/>
    </location>
</feature>
<feature type="compositionally biased region" description="Polar residues" evidence="1">
    <location>
        <begin position="1688"/>
        <end position="1698"/>
    </location>
</feature>
<feature type="sequence conflict" description="In Ref. 3; AAM11320." evidence="8" ref="3">
    <original>A</original>
    <variation>G</variation>
    <location>
        <position position="72"/>
    </location>
</feature>
<feature type="sequence conflict" description="In Ref. 3; AAM11320." evidence="8" ref="3">
    <original>V</original>
    <variation>I</variation>
    <location>
        <position position="126"/>
    </location>
</feature>
<feature type="sequence conflict" description="In Ref. 3; AAM11320." evidence="8" ref="3">
    <original>T</original>
    <variation>N</variation>
    <location>
        <position position="520"/>
    </location>
</feature>
<feature type="sequence conflict" description="In Ref. 3; AAM11320." evidence="8" ref="3">
    <original>S</original>
    <variation>P</variation>
    <location>
        <position position="902"/>
    </location>
</feature>
<feature type="sequence conflict" description="In Ref. 3; AAM11320." evidence="8" ref="3">
    <original>A</original>
    <variation>T</variation>
    <location>
        <position position="1143"/>
    </location>
</feature>
<feature type="sequence conflict" description="In Ref. 3; AAM11320." evidence="8" ref="3">
    <original>T</original>
    <variation>A</variation>
    <location>
        <position position="1162"/>
    </location>
</feature>
<feature type="sequence conflict" description="In Ref. 3; AAM11320." evidence="8" ref="3">
    <original>V</original>
    <variation>A</variation>
    <location>
        <position position="1174"/>
    </location>
</feature>
<feature type="sequence conflict" description="In Ref. 3; AAM11320." evidence="8" ref="3">
    <original>V</original>
    <variation>L</variation>
    <location>
        <position position="1246"/>
    </location>
</feature>
<feature type="sequence conflict" description="In Ref. 3; AAM11320." evidence="8" ref="3">
    <original>P</original>
    <variation>A</variation>
    <location>
        <position position="1267"/>
    </location>
</feature>
<feature type="sequence conflict" description="In Ref. 3; AAM11320." evidence="8" ref="3">
    <original>S</original>
    <variation>G</variation>
    <location>
        <position position="1319"/>
    </location>
</feature>
<feature type="sequence conflict" description="In Ref. 3; AAM11320." evidence="8" ref="3">
    <original>A</original>
    <variation>S</variation>
    <location>
        <position position="1344"/>
    </location>
</feature>
<feature type="sequence conflict" description="In Ref. 3; AAM11320." evidence="8" ref="3">
    <original>A</original>
    <variation>G</variation>
    <location>
        <position position="1385"/>
    </location>
</feature>
<dbReference type="EMBL" id="AE013599">
    <property type="protein sequence ID" value="AAF46928.2"/>
    <property type="molecule type" value="Genomic_DNA"/>
</dbReference>
<dbReference type="EMBL" id="AY094967">
    <property type="protein sequence ID" value="AAM11320.1"/>
    <property type="molecule type" value="mRNA"/>
</dbReference>
<dbReference type="RefSeq" id="NP_652039.2">
    <property type="nucleotide sequence ID" value="NM_143782.3"/>
</dbReference>
<dbReference type="SMR" id="Q9W1X4"/>
<dbReference type="BioGRID" id="70095">
    <property type="interactions" value="15"/>
</dbReference>
<dbReference type="ComplexPortal" id="CPX-2568">
    <property type="entry name" value="Nuclear pore complex"/>
</dbReference>
<dbReference type="DIP" id="DIP-18878N"/>
<dbReference type="FunCoup" id="Q9W1X4">
    <property type="interactions" value="1794"/>
</dbReference>
<dbReference type="IntAct" id="Q9W1X4">
    <property type="interactions" value="4"/>
</dbReference>
<dbReference type="MINT" id="Q9W1X4"/>
<dbReference type="STRING" id="7227.FBpp0071905"/>
<dbReference type="GlyGen" id="Q9W1X4">
    <property type="glycosylation" value="9 sites, 1 O-linked glycan (1 site)"/>
</dbReference>
<dbReference type="PaxDb" id="7227-FBpp0071905"/>
<dbReference type="EnsemblMetazoa" id="FBtr0071996">
    <property type="protein sequence ID" value="FBpp0071905"/>
    <property type="gene ID" value="FBgn0010660"/>
</dbReference>
<dbReference type="GeneID" id="46091"/>
<dbReference type="KEGG" id="dme:Dmel_CG3820"/>
<dbReference type="UCSC" id="CG3820-RA">
    <property type="organism name" value="d. melanogaster"/>
</dbReference>
<dbReference type="AGR" id="FB:FBgn0010660"/>
<dbReference type="CTD" id="8021"/>
<dbReference type="FlyBase" id="FBgn0010660">
    <property type="gene designation" value="Nup214"/>
</dbReference>
<dbReference type="VEuPathDB" id="VectorBase:FBgn0010660"/>
<dbReference type="eggNOG" id="KOG3630">
    <property type="taxonomic scope" value="Eukaryota"/>
</dbReference>
<dbReference type="GeneTree" id="ENSGT00940000165854"/>
<dbReference type="HOGENOM" id="CLU_247466_0_0_1"/>
<dbReference type="InParanoid" id="Q9W1X4"/>
<dbReference type="OMA" id="WLSTFQF"/>
<dbReference type="OrthoDB" id="248320at2759"/>
<dbReference type="PhylomeDB" id="Q9W1X4"/>
<dbReference type="Reactome" id="R-DME-159227">
    <property type="pathway name" value="Transport of the SLBP independent Mature mRNA"/>
</dbReference>
<dbReference type="Reactome" id="R-DME-159230">
    <property type="pathway name" value="Transport of the SLBP Dependant Mature mRNA"/>
</dbReference>
<dbReference type="Reactome" id="R-DME-159231">
    <property type="pathway name" value="Transport of Mature mRNA Derived from an Intronless Transcript"/>
</dbReference>
<dbReference type="Reactome" id="R-DME-159236">
    <property type="pathway name" value="Transport of Mature mRNA derived from an Intron-Containing Transcript"/>
</dbReference>
<dbReference type="Reactome" id="R-DME-3108214">
    <property type="pathway name" value="SUMOylation of DNA damage response and repair proteins"/>
</dbReference>
<dbReference type="Reactome" id="R-DME-3301854">
    <property type="pathway name" value="Nuclear Pore Complex (NPC) Disassembly"/>
</dbReference>
<dbReference type="Reactome" id="R-DME-4085377">
    <property type="pathway name" value="SUMOylation of SUMOylation proteins"/>
</dbReference>
<dbReference type="Reactome" id="R-DME-450520">
    <property type="pathway name" value="HuR (ELAVL1) binds and stabilizes mRNA"/>
</dbReference>
<dbReference type="Reactome" id="R-DME-4551638">
    <property type="pathway name" value="SUMOylation of chromatin organization proteins"/>
</dbReference>
<dbReference type="Reactome" id="R-DME-4615885">
    <property type="pathway name" value="SUMOylation of DNA replication proteins"/>
</dbReference>
<dbReference type="Reactome" id="R-DME-5578749">
    <property type="pathway name" value="Transcriptional regulation by small RNAs"/>
</dbReference>
<dbReference type="Reactome" id="R-DME-9615933">
    <property type="pathway name" value="Postmitotic nuclear pore complex (NPC) reformation"/>
</dbReference>
<dbReference type="BioGRID-ORCS" id="46091">
    <property type="hits" value="0 hits in 1 CRISPR screen"/>
</dbReference>
<dbReference type="GenomeRNAi" id="46091"/>
<dbReference type="PRO" id="PR:Q9W1X4"/>
<dbReference type="Proteomes" id="UP000000803">
    <property type="component" value="Chromosome 2R"/>
</dbReference>
<dbReference type="Bgee" id="FBgn0010660">
    <property type="expression patterns" value="Expressed in eye disc (Drosophila) and 91 other cell types or tissues"/>
</dbReference>
<dbReference type="GO" id="GO:0005635">
    <property type="term" value="C:nuclear envelope"/>
    <property type="evidence" value="ECO:0000314"/>
    <property type="project" value="UniProtKB"/>
</dbReference>
<dbReference type="GO" id="GO:0031965">
    <property type="term" value="C:nuclear membrane"/>
    <property type="evidence" value="ECO:0007669"/>
    <property type="project" value="UniProtKB-SubCell"/>
</dbReference>
<dbReference type="GO" id="GO:0005643">
    <property type="term" value="C:nuclear pore"/>
    <property type="evidence" value="ECO:0000314"/>
    <property type="project" value="FlyBase"/>
</dbReference>
<dbReference type="GO" id="GO:0008139">
    <property type="term" value="F:nuclear localization sequence binding"/>
    <property type="evidence" value="ECO:0000318"/>
    <property type="project" value="GO_Central"/>
</dbReference>
<dbReference type="GO" id="GO:0017056">
    <property type="term" value="F:structural constituent of nuclear pore"/>
    <property type="evidence" value="ECO:0000318"/>
    <property type="project" value="GO_Central"/>
</dbReference>
<dbReference type="GO" id="GO:0051028">
    <property type="term" value="P:mRNA transport"/>
    <property type="evidence" value="ECO:0007669"/>
    <property type="project" value="UniProtKB-KW"/>
</dbReference>
<dbReference type="GO" id="GO:0046826">
    <property type="term" value="P:negative regulation of protein export from nucleus"/>
    <property type="evidence" value="ECO:0000315"/>
    <property type="project" value="FlyBase"/>
</dbReference>
<dbReference type="GO" id="GO:0046833">
    <property type="term" value="P:positive regulation of RNA export from nucleus"/>
    <property type="evidence" value="ECO:0000315"/>
    <property type="project" value="UniProtKB"/>
</dbReference>
<dbReference type="GO" id="GO:0006606">
    <property type="term" value="P:protein import into nucleus"/>
    <property type="evidence" value="ECO:0000314"/>
    <property type="project" value="UniProtKB"/>
</dbReference>
<dbReference type="GO" id="GO:0090204">
    <property type="term" value="P:protein localization to nuclear pore"/>
    <property type="evidence" value="ECO:0000315"/>
    <property type="project" value="FlyBase"/>
</dbReference>
<dbReference type="GO" id="GO:0006405">
    <property type="term" value="P:RNA export from nucleus"/>
    <property type="evidence" value="ECO:0000318"/>
    <property type="project" value="GO_Central"/>
</dbReference>
<dbReference type="FunFam" id="2.130.10.10:FF:000142">
    <property type="entry name" value="Nuclear pore complex protein Nup214"/>
    <property type="match status" value="1"/>
</dbReference>
<dbReference type="Gene3D" id="2.130.10.10">
    <property type="entry name" value="YVTN repeat-like/Quinoprotein amine dehydrogenase"/>
    <property type="match status" value="1"/>
</dbReference>
<dbReference type="InterPro" id="IPR026054">
    <property type="entry name" value="Nucleoporin"/>
</dbReference>
<dbReference type="InterPro" id="IPR039462">
    <property type="entry name" value="Nup159/Nup146_N"/>
</dbReference>
<dbReference type="InterPro" id="IPR015943">
    <property type="entry name" value="WD40/YVTN_repeat-like_dom_sf"/>
</dbReference>
<dbReference type="PANTHER" id="PTHR23193">
    <property type="entry name" value="NUCLEAR PORE COMPLEX PROTEIN NUP"/>
    <property type="match status" value="1"/>
</dbReference>
<dbReference type="PANTHER" id="PTHR23193:SF46">
    <property type="entry name" value="NUCLEAR PORE COMPLEX PROTEIN NUP214"/>
    <property type="match status" value="1"/>
</dbReference>
<dbReference type="Pfam" id="PF16755">
    <property type="entry name" value="Beta-prop_NUP159_NUP214"/>
    <property type="match status" value="1"/>
</dbReference>
<dbReference type="SUPFAM" id="SSF117289">
    <property type="entry name" value="Nucleoporin domain"/>
    <property type="match status" value="1"/>
</dbReference>
<name>NU214_DROME</name>
<comment type="function">
    <text evidence="4 5 6 7">Part of the nuclear pore complex (PubMed:14638854). Serves as a docking site in the receptor-mediated import of substrates across the nuclear pore complex including emb, RanGAP and phosphorylated Mad (PubMed:17032737, PubMed:17682050, PubMed:20547758). Protects mbo/Nup88 from proteasomal degradation at the nuclear pore (PubMed:17032737). Together with mbo/Nup88, sequesters emb in the cytoplasm and thereby attenuates nuclear export signal (NES)-mediated nuclear export (PubMed:17032737). Together with mbo/Nup88, required for the nuclear import of the Rel family transcription factors dorsal (dl) and Dorsal-related immunity factor (Dif) and the activation of an immune response (PubMed:17032737).</text>
</comment>
<comment type="subunit">
    <text evidence="4 5">Component of the nuclear pore complex (PubMed:14638854). Interacts with mbo/Nup88 and (via C-terminus) with emb to attenuate emb-mediated protein export (PubMed:14638854, PubMed:17032737).</text>
</comment>
<comment type="subcellular location">
    <subcellularLocation>
        <location evidence="4 7">Nucleus</location>
        <location evidence="4 7">Nuclear pore complex</location>
    </subcellularLocation>
    <subcellularLocation>
        <location evidence="5">Nucleus membrane</location>
        <topology>Peripheral membrane protein</topology>
        <orientation evidence="7">Cytoplasmic side</orientation>
    </subcellularLocation>
    <text evidence="5">Localization to the nucleus membrane depends on mbo/Nup88.</text>
</comment>
<comment type="domain">
    <text evidence="6">Contains FG repeats. FG repeats are interaction sites for karyopherins (importins, exportins) and form probably an affinity gradient, guiding the transport proteins unidirectionally with their cargo through the NPC. FG repeat regions are highly flexible and lack ordered secondary structure. The overall conservation of FG repeats regarding exact sequence, spacing, and repeat unit length is limited. FG-rich region is required for emb localization to the nuclear pore complex.</text>
</comment>
<reference evidence="9" key="1">
    <citation type="journal article" date="2000" name="Science">
        <title>The genome sequence of Drosophila melanogaster.</title>
        <authorList>
            <person name="Adams M.D."/>
            <person name="Celniker S.E."/>
            <person name="Holt R.A."/>
            <person name="Evans C.A."/>
            <person name="Gocayne J.D."/>
            <person name="Amanatides P.G."/>
            <person name="Scherer S.E."/>
            <person name="Li P.W."/>
            <person name="Hoskins R.A."/>
            <person name="Galle R.F."/>
            <person name="George R.A."/>
            <person name="Lewis S.E."/>
            <person name="Richards S."/>
            <person name="Ashburner M."/>
            <person name="Henderson S.N."/>
            <person name="Sutton G.G."/>
            <person name="Wortman J.R."/>
            <person name="Yandell M.D."/>
            <person name="Zhang Q."/>
            <person name="Chen L.X."/>
            <person name="Brandon R.C."/>
            <person name="Rogers Y.-H.C."/>
            <person name="Blazej R.G."/>
            <person name="Champe M."/>
            <person name="Pfeiffer B.D."/>
            <person name="Wan K.H."/>
            <person name="Doyle C."/>
            <person name="Baxter E.G."/>
            <person name="Helt G."/>
            <person name="Nelson C.R."/>
            <person name="Miklos G.L.G."/>
            <person name="Abril J.F."/>
            <person name="Agbayani A."/>
            <person name="An H.-J."/>
            <person name="Andrews-Pfannkoch C."/>
            <person name="Baldwin D."/>
            <person name="Ballew R.M."/>
            <person name="Basu A."/>
            <person name="Baxendale J."/>
            <person name="Bayraktaroglu L."/>
            <person name="Beasley E.M."/>
            <person name="Beeson K.Y."/>
            <person name="Benos P.V."/>
            <person name="Berman B.P."/>
            <person name="Bhandari D."/>
            <person name="Bolshakov S."/>
            <person name="Borkova D."/>
            <person name="Botchan M.R."/>
            <person name="Bouck J."/>
            <person name="Brokstein P."/>
            <person name="Brottier P."/>
            <person name="Burtis K.C."/>
            <person name="Busam D.A."/>
            <person name="Butler H."/>
            <person name="Cadieu E."/>
            <person name="Center A."/>
            <person name="Chandra I."/>
            <person name="Cherry J.M."/>
            <person name="Cawley S."/>
            <person name="Dahlke C."/>
            <person name="Davenport L.B."/>
            <person name="Davies P."/>
            <person name="de Pablos B."/>
            <person name="Delcher A."/>
            <person name="Deng Z."/>
            <person name="Mays A.D."/>
            <person name="Dew I."/>
            <person name="Dietz S.M."/>
            <person name="Dodson K."/>
            <person name="Doup L.E."/>
            <person name="Downes M."/>
            <person name="Dugan-Rocha S."/>
            <person name="Dunkov B.C."/>
            <person name="Dunn P."/>
            <person name="Durbin K.J."/>
            <person name="Evangelista C.C."/>
            <person name="Ferraz C."/>
            <person name="Ferriera S."/>
            <person name="Fleischmann W."/>
            <person name="Fosler C."/>
            <person name="Gabrielian A.E."/>
            <person name="Garg N.S."/>
            <person name="Gelbart W.M."/>
            <person name="Glasser K."/>
            <person name="Glodek A."/>
            <person name="Gong F."/>
            <person name="Gorrell J.H."/>
            <person name="Gu Z."/>
            <person name="Guan P."/>
            <person name="Harris M."/>
            <person name="Harris N.L."/>
            <person name="Harvey D.A."/>
            <person name="Heiman T.J."/>
            <person name="Hernandez J.R."/>
            <person name="Houck J."/>
            <person name="Hostin D."/>
            <person name="Houston K.A."/>
            <person name="Howland T.J."/>
            <person name="Wei M.-H."/>
            <person name="Ibegwam C."/>
            <person name="Jalali M."/>
            <person name="Kalush F."/>
            <person name="Karpen G.H."/>
            <person name="Ke Z."/>
            <person name="Kennison J.A."/>
            <person name="Ketchum K.A."/>
            <person name="Kimmel B.E."/>
            <person name="Kodira C.D."/>
            <person name="Kraft C.L."/>
            <person name="Kravitz S."/>
            <person name="Kulp D."/>
            <person name="Lai Z."/>
            <person name="Lasko P."/>
            <person name="Lei Y."/>
            <person name="Levitsky A.A."/>
            <person name="Li J.H."/>
            <person name="Li Z."/>
            <person name="Liang Y."/>
            <person name="Lin X."/>
            <person name="Liu X."/>
            <person name="Mattei B."/>
            <person name="McIntosh T.C."/>
            <person name="McLeod M.P."/>
            <person name="McPherson D."/>
            <person name="Merkulov G."/>
            <person name="Milshina N.V."/>
            <person name="Mobarry C."/>
            <person name="Morris J."/>
            <person name="Moshrefi A."/>
            <person name="Mount S.M."/>
            <person name="Moy M."/>
            <person name="Murphy B."/>
            <person name="Murphy L."/>
            <person name="Muzny D.M."/>
            <person name="Nelson D.L."/>
            <person name="Nelson D.R."/>
            <person name="Nelson K.A."/>
            <person name="Nixon K."/>
            <person name="Nusskern D.R."/>
            <person name="Pacleb J.M."/>
            <person name="Palazzolo M."/>
            <person name="Pittman G.S."/>
            <person name="Pan S."/>
            <person name="Pollard J."/>
            <person name="Puri V."/>
            <person name="Reese M.G."/>
            <person name="Reinert K."/>
            <person name="Remington K."/>
            <person name="Saunders R.D.C."/>
            <person name="Scheeler F."/>
            <person name="Shen H."/>
            <person name="Shue B.C."/>
            <person name="Siden-Kiamos I."/>
            <person name="Simpson M."/>
            <person name="Skupski M.P."/>
            <person name="Smith T.J."/>
            <person name="Spier E."/>
            <person name="Spradling A.C."/>
            <person name="Stapleton M."/>
            <person name="Strong R."/>
            <person name="Sun E."/>
            <person name="Svirskas R."/>
            <person name="Tector C."/>
            <person name="Turner R."/>
            <person name="Venter E."/>
            <person name="Wang A.H."/>
            <person name="Wang X."/>
            <person name="Wang Z.-Y."/>
            <person name="Wassarman D.A."/>
            <person name="Weinstock G.M."/>
            <person name="Weissenbach J."/>
            <person name="Williams S.M."/>
            <person name="Woodage T."/>
            <person name="Worley K.C."/>
            <person name="Wu D."/>
            <person name="Yang S."/>
            <person name="Yao Q.A."/>
            <person name="Ye J."/>
            <person name="Yeh R.-F."/>
            <person name="Zaveri J.S."/>
            <person name="Zhan M."/>
            <person name="Zhang G."/>
            <person name="Zhao Q."/>
            <person name="Zheng L."/>
            <person name="Zheng X.H."/>
            <person name="Zhong F.N."/>
            <person name="Zhong W."/>
            <person name="Zhou X."/>
            <person name="Zhu S.C."/>
            <person name="Zhu X."/>
            <person name="Smith H.O."/>
            <person name="Gibbs R.A."/>
            <person name="Myers E.W."/>
            <person name="Rubin G.M."/>
            <person name="Venter J.C."/>
        </authorList>
    </citation>
    <scope>NUCLEOTIDE SEQUENCE [LARGE SCALE GENOMIC DNA]</scope>
    <source>
        <strain evidence="2">Berkeley</strain>
    </source>
</reference>
<reference evidence="8 9" key="2">
    <citation type="journal article" date="2002" name="Genome Biol.">
        <title>Annotation of the Drosophila melanogaster euchromatic genome: a systematic review.</title>
        <authorList>
            <person name="Misra S."/>
            <person name="Crosby M.A."/>
            <person name="Mungall C.J."/>
            <person name="Matthews B.B."/>
            <person name="Campbell K.S."/>
            <person name="Hradecky P."/>
            <person name="Huang Y."/>
            <person name="Kaminker J.S."/>
            <person name="Millburn G.H."/>
            <person name="Prochnik S.E."/>
            <person name="Smith C.D."/>
            <person name="Tupy J.L."/>
            <person name="Whitfield E.J."/>
            <person name="Bayraktaroglu L."/>
            <person name="Berman B.P."/>
            <person name="Bettencourt B.R."/>
            <person name="Celniker S.E."/>
            <person name="de Grey A.D.N.J."/>
            <person name="Drysdale R.A."/>
            <person name="Harris N.L."/>
            <person name="Richter J."/>
            <person name="Russo S."/>
            <person name="Schroeder A.J."/>
            <person name="Shu S.Q."/>
            <person name="Stapleton M."/>
            <person name="Yamada C."/>
            <person name="Ashburner M."/>
            <person name="Gelbart W.M."/>
            <person name="Rubin G.M."/>
            <person name="Lewis S.E."/>
        </authorList>
    </citation>
    <scope>GENOME REANNOTATION</scope>
    <source>
        <strain>Berkeley</strain>
    </source>
</reference>
<reference evidence="10" key="3">
    <citation type="journal article" date="2002" name="Genome Biol.">
        <title>A Drosophila full-length cDNA resource.</title>
        <authorList>
            <person name="Stapleton M."/>
            <person name="Carlson J.W."/>
            <person name="Brokstein P."/>
            <person name="Yu C."/>
            <person name="Champe M."/>
            <person name="George R.A."/>
            <person name="Guarin H."/>
            <person name="Kronmiller B."/>
            <person name="Pacleb J.M."/>
            <person name="Park S."/>
            <person name="Wan K.H."/>
            <person name="Rubin G.M."/>
            <person name="Celniker S.E."/>
        </authorList>
    </citation>
    <scope>NUCLEOTIDE SEQUENCE [LARGE SCALE MRNA]</scope>
    <source>
        <strain evidence="3">Berkeley</strain>
        <tissue evidence="3">Embryo</tissue>
    </source>
</reference>
<reference evidence="8" key="4">
    <citation type="journal article" date="2003" name="J. Cell Biol.">
        <title>The Drosophila nucleoporin DNup88 localizes DNup214 and CRM1 on the nuclear envelope and attenuates NES-mediated nuclear export.</title>
        <authorList>
            <person name="Roth P."/>
            <person name="Xylourgidis N."/>
            <person name="Sabri N."/>
            <person name="Uv A.E."/>
            <person name="Fornerod M."/>
            <person name="Samakovlis C."/>
        </authorList>
    </citation>
    <scope>FUNCTION</scope>
    <scope>INTERACTION WITH MBO/NUP88</scope>
    <scope>SUBCELLULAR LOCATION</scope>
</reference>
<reference key="5">
    <citation type="journal article" date="2006" name="J. Cell Sci.">
        <title>The nucleoporin Nup214 sequesters CRM1 at the nuclear rim and modulates NFkappaB activation in Drosophila.</title>
        <authorList>
            <person name="Xylourgidis N."/>
            <person name="Roth P."/>
            <person name="Sabri N."/>
            <person name="Tsarouhas V."/>
            <person name="Samakovlis C."/>
        </authorList>
    </citation>
    <scope>FUNCTION</scope>
    <scope>SUBCELLULAR LOCATION</scope>
    <scope>INTERACTION WITH EMB AND MBO</scope>
</reference>
<reference key="6">
    <citation type="journal article" date="2007" name="J. Cell Biol.">
        <title>Distinct functions of the Drosophila Nup153 and Nup214 FG domains in nuclear protein transport.</title>
        <authorList>
            <person name="Sabri N."/>
            <person name="Roth P."/>
            <person name="Xylourgidis N."/>
            <person name="Sadeghifar F."/>
            <person name="Adler J."/>
            <person name="Samakovlis C."/>
        </authorList>
    </citation>
    <scope>FUNCTION</scope>
    <scope>SUBCELLULAR LOCATION</scope>
    <scope>DOMAIN</scope>
</reference>
<reference key="7">
    <citation type="journal article" date="2010" name="Mol. Cell. Biol.">
        <title>Specific nucleoporin requirement for Smad nuclear translocation.</title>
        <authorList>
            <person name="Chen X."/>
            <person name="Xu L."/>
        </authorList>
    </citation>
    <scope>FUNCTION</scope>
    <scope>SUBCELLULAR LOCATION</scope>
</reference>